<organism>
    <name type="scientific">Methanothrix thermoacetophila (strain DSM 6194 / JCM 14653 / NBRC 101360 / PT)</name>
    <name type="common">Methanosaeta thermophila</name>
    <dbReference type="NCBI Taxonomy" id="349307"/>
    <lineage>
        <taxon>Archaea</taxon>
        <taxon>Methanobacteriati</taxon>
        <taxon>Methanobacteriota</taxon>
        <taxon>Stenosarchaea group</taxon>
        <taxon>Methanomicrobia</taxon>
        <taxon>Methanotrichales</taxon>
        <taxon>Methanotrichaceae</taxon>
        <taxon>Methanothrix</taxon>
    </lineage>
</organism>
<name>RPO12_METTP</name>
<proteinExistence type="inferred from homology"/>
<protein>
    <recommendedName>
        <fullName evidence="1">DNA-directed RNA polymerase subunit Rpo12</fullName>
        <ecNumber evidence="1">2.7.7.6</ecNumber>
    </recommendedName>
    <alternativeName>
        <fullName evidence="1">DNA-directed RNA polymerase subunit P</fullName>
    </alternativeName>
</protein>
<reference key="1">
    <citation type="submission" date="2006-10" db="EMBL/GenBank/DDBJ databases">
        <title>Complete sequence of Methanosaeta thermophila PT.</title>
        <authorList>
            <consortium name="US DOE Joint Genome Institute"/>
            <person name="Copeland A."/>
            <person name="Lucas S."/>
            <person name="Lapidus A."/>
            <person name="Barry K."/>
            <person name="Detter J.C."/>
            <person name="Glavina del Rio T."/>
            <person name="Hammon N."/>
            <person name="Israni S."/>
            <person name="Pitluck S."/>
            <person name="Chain P."/>
            <person name="Malfatti S."/>
            <person name="Shin M."/>
            <person name="Vergez L."/>
            <person name="Schmutz J."/>
            <person name="Larimer F."/>
            <person name="Land M."/>
            <person name="Hauser L."/>
            <person name="Kyrpides N."/>
            <person name="Kim E."/>
            <person name="Smith K.S."/>
            <person name="Ingram-Smith C."/>
            <person name="Richardson P."/>
        </authorList>
    </citation>
    <scope>NUCLEOTIDE SEQUENCE [LARGE SCALE GENOMIC DNA]</scope>
    <source>
        <strain>DSM 6194 / JCM 14653 / NBRC 101360 / PT</strain>
    </source>
</reference>
<dbReference type="EC" id="2.7.7.6" evidence="1"/>
<dbReference type="EMBL" id="CP000477">
    <property type="protein sequence ID" value="ABK15134.1"/>
    <property type="molecule type" value="Genomic_DNA"/>
</dbReference>
<dbReference type="RefSeq" id="WP_011696526.1">
    <property type="nucleotide sequence ID" value="NC_008553.1"/>
</dbReference>
<dbReference type="SMR" id="A0B8W0"/>
<dbReference type="STRING" id="349307.Mthe_1359"/>
<dbReference type="GeneID" id="4462855"/>
<dbReference type="KEGG" id="mtp:Mthe_1359"/>
<dbReference type="HOGENOM" id="CLU_179456_2_1_2"/>
<dbReference type="OrthoDB" id="129238at2157"/>
<dbReference type="Proteomes" id="UP000000674">
    <property type="component" value="Chromosome"/>
</dbReference>
<dbReference type="GO" id="GO:0005737">
    <property type="term" value="C:cytoplasm"/>
    <property type="evidence" value="ECO:0007669"/>
    <property type="project" value="UniProtKB-SubCell"/>
</dbReference>
<dbReference type="GO" id="GO:0000428">
    <property type="term" value="C:DNA-directed RNA polymerase complex"/>
    <property type="evidence" value="ECO:0007669"/>
    <property type="project" value="UniProtKB-KW"/>
</dbReference>
<dbReference type="GO" id="GO:0003677">
    <property type="term" value="F:DNA binding"/>
    <property type="evidence" value="ECO:0007669"/>
    <property type="project" value="InterPro"/>
</dbReference>
<dbReference type="GO" id="GO:0003899">
    <property type="term" value="F:DNA-directed RNA polymerase activity"/>
    <property type="evidence" value="ECO:0007669"/>
    <property type="project" value="UniProtKB-UniRule"/>
</dbReference>
<dbReference type="GO" id="GO:0008270">
    <property type="term" value="F:zinc ion binding"/>
    <property type="evidence" value="ECO:0007669"/>
    <property type="project" value="UniProtKB-UniRule"/>
</dbReference>
<dbReference type="GO" id="GO:0006351">
    <property type="term" value="P:DNA-templated transcription"/>
    <property type="evidence" value="ECO:0007669"/>
    <property type="project" value="UniProtKB-UniRule"/>
</dbReference>
<dbReference type="Gene3D" id="2.20.28.30">
    <property type="entry name" value="RNA polymerase ii, chain L"/>
    <property type="match status" value="1"/>
</dbReference>
<dbReference type="HAMAP" id="MF_00615">
    <property type="entry name" value="RNApol_arch_Rpo12"/>
    <property type="match status" value="1"/>
</dbReference>
<dbReference type="InterPro" id="IPR006591">
    <property type="entry name" value="RNAP_P/RPABC4"/>
</dbReference>
<dbReference type="InterPro" id="IPR029040">
    <property type="entry name" value="RPABC4/Spt4"/>
</dbReference>
<dbReference type="InterPro" id="IPR023464">
    <property type="entry name" value="Rpo12"/>
</dbReference>
<dbReference type="NCBIfam" id="NF001606">
    <property type="entry name" value="PRK00398.1-3"/>
    <property type="match status" value="1"/>
</dbReference>
<dbReference type="Pfam" id="PF03604">
    <property type="entry name" value="Zn_ribbon_RPAB4"/>
    <property type="match status" value="1"/>
</dbReference>
<dbReference type="SMART" id="SM00659">
    <property type="entry name" value="RPOLCX"/>
    <property type="match status" value="1"/>
</dbReference>
<dbReference type="SUPFAM" id="SSF63393">
    <property type="entry name" value="RNA polymerase subunits"/>
    <property type="match status" value="1"/>
</dbReference>
<comment type="function">
    <text evidence="1">DNA-dependent RNA polymerase (RNAP) catalyzes the transcription of DNA into RNA using the four ribonucleoside triphosphates as substrates.</text>
</comment>
<comment type="catalytic activity">
    <reaction evidence="1">
        <text>RNA(n) + a ribonucleoside 5'-triphosphate = RNA(n+1) + diphosphate</text>
        <dbReference type="Rhea" id="RHEA:21248"/>
        <dbReference type="Rhea" id="RHEA-COMP:14527"/>
        <dbReference type="Rhea" id="RHEA-COMP:17342"/>
        <dbReference type="ChEBI" id="CHEBI:33019"/>
        <dbReference type="ChEBI" id="CHEBI:61557"/>
        <dbReference type="ChEBI" id="CHEBI:140395"/>
        <dbReference type="EC" id="2.7.7.6"/>
    </reaction>
</comment>
<comment type="cofactor">
    <cofactor evidence="1">
        <name>Zn(2+)</name>
        <dbReference type="ChEBI" id="CHEBI:29105"/>
    </cofactor>
    <text evidence="1">Binds 1 zinc ion.</text>
</comment>
<comment type="subunit">
    <text evidence="1">Part of the RNA polymerase complex.</text>
</comment>
<comment type="subcellular location">
    <subcellularLocation>
        <location evidence="1">Cytoplasm</location>
    </subcellularLocation>
</comment>
<comment type="similarity">
    <text evidence="1">Belongs to the archaeal Rpo12/eukaryotic RPC10 RNA polymerase subunit family.</text>
</comment>
<sequence length="45" mass="5326">MAYKCARCKRTVEVDYEYAGVRCPYCGHRILMKERPTTVKRMKAI</sequence>
<keyword id="KW-0963">Cytoplasm</keyword>
<keyword id="KW-0240">DNA-directed RNA polymerase</keyword>
<keyword id="KW-0479">Metal-binding</keyword>
<keyword id="KW-0548">Nucleotidyltransferase</keyword>
<keyword id="KW-1185">Reference proteome</keyword>
<keyword id="KW-0804">Transcription</keyword>
<keyword id="KW-0808">Transferase</keyword>
<keyword id="KW-0862">Zinc</keyword>
<feature type="chain" id="PRO_1000061339" description="DNA-directed RNA polymerase subunit Rpo12">
    <location>
        <begin position="1"/>
        <end position="45"/>
    </location>
</feature>
<feature type="binding site" evidence="1">
    <location>
        <position position="8"/>
    </location>
    <ligand>
        <name>Zn(2+)</name>
        <dbReference type="ChEBI" id="CHEBI:29105"/>
    </ligand>
</feature>
<feature type="binding site" evidence="1">
    <location>
        <position position="23"/>
    </location>
    <ligand>
        <name>Zn(2+)</name>
        <dbReference type="ChEBI" id="CHEBI:29105"/>
    </ligand>
</feature>
<feature type="binding site" evidence="1">
    <location>
        <position position="26"/>
    </location>
    <ligand>
        <name>Zn(2+)</name>
        <dbReference type="ChEBI" id="CHEBI:29105"/>
    </ligand>
</feature>
<evidence type="ECO:0000255" key="1">
    <source>
        <dbReference type="HAMAP-Rule" id="MF_00615"/>
    </source>
</evidence>
<accession>A0B8W0</accession>
<gene>
    <name evidence="1" type="primary">rpo12</name>
    <name evidence="1" type="synonym">rpoP</name>
    <name type="ordered locus">Mthe_1359</name>
</gene>